<protein>
    <recommendedName>
        <fullName evidence="1">Threonine--tRNA ligase</fullName>
        <ecNumber evidence="1">6.1.1.3</ecNumber>
    </recommendedName>
    <alternativeName>
        <fullName evidence="1">Threonyl-tRNA synthetase</fullName>
        <shortName evidence="1">ThrRS</shortName>
    </alternativeName>
</protein>
<dbReference type="EC" id="6.1.1.3" evidence="1"/>
<dbReference type="EMBL" id="CP000517">
    <property type="protein sequence ID" value="ABX27527.1"/>
    <property type="molecule type" value="Genomic_DNA"/>
</dbReference>
<dbReference type="RefSeq" id="WP_012212129.1">
    <property type="nucleotide sequence ID" value="NC_010080.1"/>
</dbReference>
<dbReference type="SMR" id="A8YWE1"/>
<dbReference type="KEGG" id="lhe:lhv_1611"/>
<dbReference type="eggNOG" id="COG0441">
    <property type="taxonomic scope" value="Bacteria"/>
</dbReference>
<dbReference type="HOGENOM" id="CLU_008554_0_1_9"/>
<dbReference type="Proteomes" id="UP000000790">
    <property type="component" value="Chromosome"/>
</dbReference>
<dbReference type="GO" id="GO:0005737">
    <property type="term" value="C:cytoplasm"/>
    <property type="evidence" value="ECO:0007669"/>
    <property type="project" value="UniProtKB-SubCell"/>
</dbReference>
<dbReference type="GO" id="GO:0005524">
    <property type="term" value="F:ATP binding"/>
    <property type="evidence" value="ECO:0007669"/>
    <property type="project" value="UniProtKB-UniRule"/>
</dbReference>
<dbReference type="GO" id="GO:0140096">
    <property type="term" value="F:catalytic activity, acting on a protein"/>
    <property type="evidence" value="ECO:0007669"/>
    <property type="project" value="UniProtKB-ARBA"/>
</dbReference>
<dbReference type="GO" id="GO:0046872">
    <property type="term" value="F:metal ion binding"/>
    <property type="evidence" value="ECO:0007669"/>
    <property type="project" value="UniProtKB-KW"/>
</dbReference>
<dbReference type="GO" id="GO:0004829">
    <property type="term" value="F:threonine-tRNA ligase activity"/>
    <property type="evidence" value="ECO:0007669"/>
    <property type="project" value="UniProtKB-UniRule"/>
</dbReference>
<dbReference type="GO" id="GO:0016740">
    <property type="term" value="F:transferase activity"/>
    <property type="evidence" value="ECO:0007669"/>
    <property type="project" value="UniProtKB-ARBA"/>
</dbReference>
<dbReference type="GO" id="GO:0000049">
    <property type="term" value="F:tRNA binding"/>
    <property type="evidence" value="ECO:0007669"/>
    <property type="project" value="UniProtKB-KW"/>
</dbReference>
<dbReference type="GO" id="GO:0006435">
    <property type="term" value="P:threonyl-tRNA aminoacylation"/>
    <property type="evidence" value="ECO:0007669"/>
    <property type="project" value="UniProtKB-UniRule"/>
</dbReference>
<dbReference type="CDD" id="cd01667">
    <property type="entry name" value="TGS_ThrRS"/>
    <property type="match status" value="1"/>
</dbReference>
<dbReference type="CDD" id="cd00860">
    <property type="entry name" value="ThrRS_anticodon"/>
    <property type="match status" value="1"/>
</dbReference>
<dbReference type="CDD" id="cd00771">
    <property type="entry name" value="ThrRS_core"/>
    <property type="match status" value="1"/>
</dbReference>
<dbReference type="FunFam" id="3.30.930.10:FF:000002">
    <property type="entry name" value="Threonine--tRNA ligase"/>
    <property type="match status" value="1"/>
</dbReference>
<dbReference type="FunFam" id="3.40.50.800:FF:000001">
    <property type="entry name" value="Threonine--tRNA ligase"/>
    <property type="match status" value="1"/>
</dbReference>
<dbReference type="Gene3D" id="3.10.20.30">
    <property type="match status" value="1"/>
</dbReference>
<dbReference type="Gene3D" id="3.30.54.20">
    <property type="match status" value="1"/>
</dbReference>
<dbReference type="Gene3D" id="3.40.50.800">
    <property type="entry name" value="Anticodon-binding domain"/>
    <property type="match status" value="1"/>
</dbReference>
<dbReference type="Gene3D" id="3.30.930.10">
    <property type="entry name" value="Bira Bifunctional Protein, Domain 2"/>
    <property type="match status" value="1"/>
</dbReference>
<dbReference type="Gene3D" id="3.30.980.10">
    <property type="entry name" value="Threonyl-trna Synthetase, Chain A, domain 2"/>
    <property type="match status" value="1"/>
</dbReference>
<dbReference type="HAMAP" id="MF_00184">
    <property type="entry name" value="Thr_tRNA_synth"/>
    <property type="match status" value="1"/>
</dbReference>
<dbReference type="InterPro" id="IPR002314">
    <property type="entry name" value="aa-tRNA-synt_IIb"/>
</dbReference>
<dbReference type="InterPro" id="IPR006195">
    <property type="entry name" value="aa-tRNA-synth_II"/>
</dbReference>
<dbReference type="InterPro" id="IPR045864">
    <property type="entry name" value="aa-tRNA-synth_II/BPL/LPL"/>
</dbReference>
<dbReference type="InterPro" id="IPR004154">
    <property type="entry name" value="Anticodon-bd"/>
</dbReference>
<dbReference type="InterPro" id="IPR036621">
    <property type="entry name" value="Anticodon-bd_dom_sf"/>
</dbReference>
<dbReference type="InterPro" id="IPR012675">
    <property type="entry name" value="Beta-grasp_dom_sf"/>
</dbReference>
<dbReference type="InterPro" id="IPR004095">
    <property type="entry name" value="TGS"/>
</dbReference>
<dbReference type="InterPro" id="IPR012676">
    <property type="entry name" value="TGS-like"/>
</dbReference>
<dbReference type="InterPro" id="IPR002320">
    <property type="entry name" value="Thr-tRNA-ligase_IIa"/>
</dbReference>
<dbReference type="InterPro" id="IPR018163">
    <property type="entry name" value="Thr/Ala-tRNA-synth_IIc_edit"/>
</dbReference>
<dbReference type="InterPro" id="IPR047246">
    <property type="entry name" value="ThrRS_anticodon"/>
</dbReference>
<dbReference type="InterPro" id="IPR033728">
    <property type="entry name" value="ThrRS_core"/>
</dbReference>
<dbReference type="InterPro" id="IPR012947">
    <property type="entry name" value="tRNA_SAD"/>
</dbReference>
<dbReference type="NCBIfam" id="TIGR00418">
    <property type="entry name" value="thrS"/>
    <property type="match status" value="1"/>
</dbReference>
<dbReference type="PANTHER" id="PTHR11451:SF56">
    <property type="entry name" value="THREONINE--TRNA LIGASE 1"/>
    <property type="match status" value="1"/>
</dbReference>
<dbReference type="PANTHER" id="PTHR11451">
    <property type="entry name" value="THREONINE-TRNA LIGASE"/>
    <property type="match status" value="1"/>
</dbReference>
<dbReference type="Pfam" id="PF03129">
    <property type="entry name" value="HGTP_anticodon"/>
    <property type="match status" value="1"/>
</dbReference>
<dbReference type="Pfam" id="PF02824">
    <property type="entry name" value="TGS"/>
    <property type="match status" value="1"/>
</dbReference>
<dbReference type="Pfam" id="PF00587">
    <property type="entry name" value="tRNA-synt_2b"/>
    <property type="match status" value="1"/>
</dbReference>
<dbReference type="PRINTS" id="PR01047">
    <property type="entry name" value="TRNASYNTHTHR"/>
</dbReference>
<dbReference type="SMART" id="SM00863">
    <property type="entry name" value="tRNA_SAD"/>
    <property type="match status" value="1"/>
</dbReference>
<dbReference type="SUPFAM" id="SSF52954">
    <property type="entry name" value="Class II aaRS ABD-related"/>
    <property type="match status" value="1"/>
</dbReference>
<dbReference type="SUPFAM" id="SSF55681">
    <property type="entry name" value="Class II aaRS and biotin synthetases"/>
    <property type="match status" value="1"/>
</dbReference>
<dbReference type="SUPFAM" id="SSF81271">
    <property type="entry name" value="TGS-like"/>
    <property type="match status" value="1"/>
</dbReference>
<dbReference type="SUPFAM" id="SSF55186">
    <property type="entry name" value="ThrRS/AlaRS common domain"/>
    <property type="match status" value="1"/>
</dbReference>
<dbReference type="PROSITE" id="PS50862">
    <property type="entry name" value="AA_TRNA_LIGASE_II"/>
    <property type="match status" value="1"/>
</dbReference>
<dbReference type="PROSITE" id="PS51880">
    <property type="entry name" value="TGS"/>
    <property type="match status" value="1"/>
</dbReference>
<organism>
    <name type="scientific">Lactobacillus helveticus (strain DPC 4571)</name>
    <dbReference type="NCBI Taxonomy" id="405566"/>
    <lineage>
        <taxon>Bacteria</taxon>
        <taxon>Bacillati</taxon>
        <taxon>Bacillota</taxon>
        <taxon>Bacilli</taxon>
        <taxon>Lactobacillales</taxon>
        <taxon>Lactobacillaceae</taxon>
        <taxon>Lactobacillus</taxon>
    </lineage>
</organism>
<name>SYT_LACH4</name>
<comment type="function">
    <text evidence="1">Catalyzes the attachment of threonine to tRNA(Thr) in a two-step reaction: L-threonine is first activated by ATP to form Thr-AMP and then transferred to the acceptor end of tRNA(Thr). Also edits incorrectly charged L-seryl-tRNA(Thr).</text>
</comment>
<comment type="catalytic activity">
    <reaction evidence="1">
        <text>tRNA(Thr) + L-threonine + ATP = L-threonyl-tRNA(Thr) + AMP + diphosphate + H(+)</text>
        <dbReference type="Rhea" id="RHEA:24624"/>
        <dbReference type="Rhea" id="RHEA-COMP:9670"/>
        <dbReference type="Rhea" id="RHEA-COMP:9704"/>
        <dbReference type="ChEBI" id="CHEBI:15378"/>
        <dbReference type="ChEBI" id="CHEBI:30616"/>
        <dbReference type="ChEBI" id="CHEBI:33019"/>
        <dbReference type="ChEBI" id="CHEBI:57926"/>
        <dbReference type="ChEBI" id="CHEBI:78442"/>
        <dbReference type="ChEBI" id="CHEBI:78534"/>
        <dbReference type="ChEBI" id="CHEBI:456215"/>
        <dbReference type="EC" id="6.1.1.3"/>
    </reaction>
</comment>
<comment type="cofactor">
    <cofactor evidence="1">
        <name>Zn(2+)</name>
        <dbReference type="ChEBI" id="CHEBI:29105"/>
    </cofactor>
    <text evidence="1">Binds 1 zinc ion per subunit.</text>
</comment>
<comment type="subunit">
    <text evidence="1">Homodimer.</text>
</comment>
<comment type="subcellular location">
    <subcellularLocation>
        <location evidence="1">Cytoplasm</location>
    </subcellularLocation>
</comment>
<comment type="similarity">
    <text evidence="1">Belongs to the class-II aminoacyl-tRNA synthetase family.</text>
</comment>
<reference key="1">
    <citation type="journal article" date="2008" name="J. Bacteriol.">
        <title>Genome sequence of Lactobacillus helveticus: an organism distinguished by selective gene loss and IS element expansion.</title>
        <authorList>
            <person name="Callanan M."/>
            <person name="Kaleta P."/>
            <person name="O'Callaghan J."/>
            <person name="O'Sullivan O."/>
            <person name="Jordan K."/>
            <person name="McAuliffe O."/>
            <person name="Sangrador-Vegas A."/>
            <person name="Slattery L."/>
            <person name="Fitzgerald G.F."/>
            <person name="Beresford T."/>
            <person name="Ross R.P."/>
        </authorList>
    </citation>
    <scope>NUCLEOTIDE SEQUENCE [LARGE SCALE GENOMIC DNA]</scope>
    <source>
        <strain>DPC 4571</strain>
    </source>
</reference>
<keyword id="KW-0030">Aminoacyl-tRNA synthetase</keyword>
<keyword id="KW-0067">ATP-binding</keyword>
<keyword id="KW-0963">Cytoplasm</keyword>
<keyword id="KW-0436">Ligase</keyword>
<keyword id="KW-0479">Metal-binding</keyword>
<keyword id="KW-0547">Nucleotide-binding</keyword>
<keyword id="KW-0648">Protein biosynthesis</keyword>
<keyword id="KW-0694">RNA-binding</keyword>
<keyword id="KW-0820">tRNA-binding</keyword>
<keyword id="KW-0862">Zinc</keyword>
<sequence>MSFSITLPDGSKKDFEESLTIADLAQNIATSLGKAAVAGKVNGELKPLDYKLDSDSEVAIITNKDEEGLDVLRATAAFVFEAVAKCEYPELRLGEHVADEGGFYVDTDKDDQIKVGELPKLEKAMQKVIKNGEKIEHVQIAKSELEELYKNDKFKSELLAKVEGDTVDAYKLGDFVDFGFDALLPNTGKIKQFKLLSVAGAYWLGKSSNPMLQRIFGTAFFKEADLKADLKRRQEIKERDHRTIGRDLDLFFVDPKVGAGLPYWMPKGATIRRAVERYIIDREVADGYQHVYTPVLMNLDAYKTSGHWAHYRDDMFPPMDMGDGEMLELRPMNCPSHIQIFKHHIRSYRDLPLRVAELGMMHRYEKSGALSGLQRVREMTLNDGHTFVALDQVQTEFAKILKLIMEVYKDFDITDYYFRLSYRDPKNTDKYFANDEMWEKSQKMLKGAMDDLGLDYVEAEGEAAFYGPKLDIQTKTALGNDETMSTIQLDFMLPDRFGLTYVGKDGEEHRPVMIHRGIVGTMERFIAYLTEIYKGAFPTWLAPVQAEIIPVNNEAHGEYAEKVRAELAKRGFRVEVDDRNEKMGYKIRESQTQKVPYTLVLGDEEMKSGKVNLRRYGTDEEISKSLDDFINEIDADVKSYSREN</sequence>
<gene>
    <name evidence="1" type="primary">thrS</name>
    <name type="ordered locus">lhv_1611</name>
</gene>
<proteinExistence type="inferred from homology"/>
<evidence type="ECO:0000255" key="1">
    <source>
        <dbReference type="HAMAP-Rule" id="MF_00184"/>
    </source>
</evidence>
<evidence type="ECO:0000255" key="2">
    <source>
        <dbReference type="PROSITE-ProRule" id="PRU01228"/>
    </source>
</evidence>
<accession>A8YWE1</accession>
<feature type="chain" id="PRO_1000071676" description="Threonine--tRNA ligase">
    <location>
        <begin position="1"/>
        <end position="644"/>
    </location>
</feature>
<feature type="domain" description="TGS" evidence="2">
    <location>
        <begin position="1"/>
        <end position="62"/>
    </location>
</feature>
<feature type="region of interest" description="Catalytic" evidence="1">
    <location>
        <begin position="240"/>
        <end position="538"/>
    </location>
</feature>
<feature type="binding site" evidence="1">
    <location>
        <position position="334"/>
    </location>
    <ligand>
        <name>Zn(2+)</name>
        <dbReference type="ChEBI" id="CHEBI:29105"/>
    </ligand>
</feature>
<feature type="binding site" evidence="1">
    <location>
        <position position="385"/>
    </location>
    <ligand>
        <name>Zn(2+)</name>
        <dbReference type="ChEBI" id="CHEBI:29105"/>
    </ligand>
</feature>
<feature type="binding site" evidence="1">
    <location>
        <position position="515"/>
    </location>
    <ligand>
        <name>Zn(2+)</name>
        <dbReference type="ChEBI" id="CHEBI:29105"/>
    </ligand>
</feature>